<keyword id="KW-0496">Mitochondrion</keyword>
<keyword id="KW-1185">Reference proteome</keyword>
<keyword id="KW-0809">Transit peptide</keyword>
<dbReference type="EMBL" id="GG692397">
    <property type="protein sequence ID" value="EER33539.1"/>
    <property type="molecule type" value="Genomic_DNA"/>
</dbReference>
<dbReference type="RefSeq" id="XP_002548060.1">
    <property type="nucleotide sequence ID" value="XM_002548014.1"/>
</dbReference>
<dbReference type="SMR" id="C5MA45"/>
<dbReference type="EnsemblFungi" id="CTRG_02357-t43_1">
    <property type="protein sequence ID" value="CTRG_02357-t43_1-p1"/>
    <property type="gene ID" value="CTRG_02357"/>
</dbReference>
<dbReference type="GeneID" id="8301637"/>
<dbReference type="KEGG" id="ctp:CTRG_02357"/>
<dbReference type="VEuPathDB" id="FungiDB:CTRG_02357"/>
<dbReference type="eggNOG" id="ENOG502RY27">
    <property type="taxonomic scope" value="Eukaryota"/>
</dbReference>
<dbReference type="HOGENOM" id="CLU_054408_0_0_1"/>
<dbReference type="OrthoDB" id="3996489at2759"/>
<dbReference type="Proteomes" id="UP000002037">
    <property type="component" value="Unassembled WGS sequence"/>
</dbReference>
<dbReference type="GO" id="GO:0005739">
    <property type="term" value="C:mitochondrion"/>
    <property type="evidence" value="ECO:0007669"/>
    <property type="project" value="UniProtKB-SubCell"/>
</dbReference>
<dbReference type="InterPro" id="IPR029427">
    <property type="entry name" value="AIM23"/>
</dbReference>
<dbReference type="Pfam" id="PF14877">
    <property type="entry name" value="mIF3"/>
    <property type="match status" value="1"/>
</dbReference>
<comment type="subcellular location">
    <subcellularLocation>
        <location evidence="1">Mitochondrion</location>
    </subcellularLocation>
</comment>
<comment type="similarity">
    <text evidence="4">Belongs to the AIM23 family.</text>
</comment>
<organism>
    <name type="scientific">Candida tropicalis (strain ATCC MYA-3404 / T1)</name>
    <name type="common">Yeast</name>
    <dbReference type="NCBI Taxonomy" id="294747"/>
    <lineage>
        <taxon>Eukaryota</taxon>
        <taxon>Fungi</taxon>
        <taxon>Dikarya</taxon>
        <taxon>Ascomycota</taxon>
        <taxon>Saccharomycotina</taxon>
        <taxon>Pichiomycetes</taxon>
        <taxon>Debaryomycetaceae</taxon>
        <taxon>Candida/Lodderomyces clade</taxon>
        <taxon>Candida</taxon>
    </lineage>
</organism>
<protein>
    <recommendedName>
        <fullName>Altered inheritance of mitochondria protein 23, mitochondrial</fullName>
    </recommendedName>
</protein>
<proteinExistence type="inferred from homology"/>
<gene>
    <name type="primary">AIM23</name>
    <name type="ORF">CTRG_02357</name>
</gene>
<feature type="transit peptide" description="Mitochondrion" evidence="2">
    <location>
        <begin position="1"/>
        <end position="26"/>
    </location>
</feature>
<feature type="chain" id="PRO_0000399533" description="Altered inheritance of mitochondria protein 23, mitochondrial">
    <location>
        <begin position="27"/>
        <end position="353"/>
    </location>
</feature>
<feature type="region of interest" description="Disordered" evidence="3">
    <location>
        <begin position="306"/>
        <end position="341"/>
    </location>
</feature>
<feature type="compositionally biased region" description="Basic and acidic residues" evidence="3">
    <location>
        <begin position="311"/>
        <end position="320"/>
    </location>
</feature>
<feature type="compositionally biased region" description="Basic residues" evidence="3">
    <location>
        <begin position="321"/>
        <end position="336"/>
    </location>
</feature>
<reference key="1">
    <citation type="journal article" date="2009" name="Nature">
        <title>Evolution of pathogenicity and sexual reproduction in eight Candida genomes.</title>
        <authorList>
            <person name="Butler G."/>
            <person name="Rasmussen M.D."/>
            <person name="Lin M.F."/>
            <person name="Santos M.A.S."/>
            <person name="Sakthikumar S."/>
            <person name="Munro C.A."/>
            <person name="Rheinbay E."/>
            <person name="Grabherr M."/>
            <person name="Forche A."/>
            <person name="Reedy J.L."/>
            <person name="Agrafioti I."/>
            <person name="Arnaud M.B."/>
            <person name="Bates S."/>
            <person name="Brown A.J.P."/>
            <person name="Brunke S."/>
            <person name="Costanzo M.C."/>
            <person name="Fitzpatrick D.A."/>
            <person name="de Groot P.W.J."/>
            <person name="Harris D."/>
            <person name="Hoyer L.L."/>
            <person name="Hube B."/>
            <person name="Klis F.M."/>
            <person name="Kodira C."/>
            <person name="Lennard N."/>
            <person name="Logue M.E."/>
            <person name="Martin R."/>
            <person name="Neiman A.M."/>
            <person name="Nikolaou E."/>
            <person name="Quail M.A."/>
            <person name="Quinn J."/>
            <person name="Santos M.C."/>
            <person name="Schmitzberger F.F."/>
            <person name="Sherlock G."/>
            <person name="Shah P."/>
            <person name="Silverstein K.A.T."/>
            <person name="Skrzypek M.S."/>
            <person name="Soll D."/>
            <person name="Staggs R."/>
            <person name="Stansfield I."/>
            <person name="Stumpf M.P.H."/>
            <person name="Sudbery P.E."/>
            <person name="Srikantha T."/>
            <person name="Zeng Q."/>
            <person name="Berman J."/>
            <person name="Berriman M."/>
            <person name="Heitman J."/>
            <person name="Gow N.A.R."/>
            <person name="Lorenz M.C."/>
            <person name="Birren B.W."/>
            <person name="Kellis M."/>
            <person name="Cuomo C.A."/>
        </authorList>
    </citation>
    <scope>NUCLEOTIDE SEQUENCE [LARGE SCALE GENOMIC DNA]</scope>
    <source>
        <strain>ATCC MYA-3404 / T1</strain>
    </source>
</reference>
<name>AIM23_CANTT</name>
<accession>C5MA45</accession>
<evidence type="ECO:0000250" key="1"/>
<evidence type="ECO:0000255" key="2"/>
<evidence type="ECO:0000256" key="3">
    <source>
        <dbReference type="SAM" id="MobiDB-lite"/>
    </source>
</evidence>
<evidence type="ECO:0000305" key="4"/>
<sequence>MSLIFRRNLSTCLKLFQSTGKPINRFQTLYGNKSSPKSQGNQKRTKRMINGNKNHHHHHQQQQQRSERIIDPRKFEFKEGSETSKSAISSLISKIYYQSSNFMVEQVGESGLIKIHLSKILENLNLSKQGIQLIDRPKSDDDEGGRLLPLIKIVPIQEMNSWYNDLLAKSKQIELLEIGSVKTLKTLEIKLKQEQKKSATKEFQLKWSISINDLKNQKKLEIQKIIQNSKTQKSFLINVVYNKSNPGRLIDTIFKDEEDLEIEFKKRELLKKILEEEILNDLDCKWSVEGDLKTKLVYQVTPKQIQQETNKSVDKEEQPKKEKKKKQLHTQAKPKSKTSEEDLDDLYSFKIED</sequence>